<gene>
    <name evidence="1" type="primary">nrdR</name>
    <name type="ordered locus">Sbal195_3304</name>
</gene>
<proteinExistence type="inferred from homology"/>
<feature type="chain" id="PRO_1000080824" description="Transcriptional repressor NrdR">
    <location>
        <begin position="1"/>
        <end position="149"/>
    </location>
</feature>
<feature type="domain" description="ATP-cone" evidence="1">
    <location>
        <begin position="49"/>
        <end position="139"/>
    </location>
</feature>
<feature type="zinc finger region" evidence="1">
    <location>
        <begin position="3"/>
        <end position="34"/>
    </location>
</feature>
<evidence type="ECO:0000255" key="1">
    <source>
        <dbReference type="HAMAP-Rule" id="MF_00440"/>
    </source>
</evidence>
<sequence length="149" mass="17060">MHCPFCSATDTKVIDSRLVAEGHQVRRRRECTECHERFTTFEGAELVMPRVIKRDGSRQPFDEEKLQGGMLRAVEKRPVSMDEIEQALSKIKSTLRATGEREVPSEMVGNLMMEQLMSLDKVAYIRFASVYRAFEDVSEFGEAIAKLQK</sequence>
<keyword id="KW-0067">ATP-binding</keyword>
<keyword id="KW-0238">DNA-binding</keyword>
<keyword id="KW-0479">Metal-binding</keyword>
<keyword id="KW-0547">Nucleotide-binding</keyword>
<keyword id="KW-0678">Repressor</keyword>
<keyword id="KW-0804">Transcription</keyword>
<keyword id="KW-0805">Transcription regulation</keyword>
<keyword id="KW-0862">Zinc</keyword>
<keyword id="KW-0863">Zinc-finger</keyword>
<dbReference type="EMBL" id="CP000891">
    <property type="protein sequence ID" value="ABX50466.1"/>
    <property type="molecule type" value="Genomic_DNA"/>
</dbReference>
<dbReference type="RefSeq" id="WP_006082643.1">
    <property type="nucleotide sequence ID" value="NC_009997.1"/>
</dbReference>
<dbReference type="SMR" id="A9KYJ5"/>
<dbReference type="GeneID" id="11773354"/>
<dbReference type="KEGG" id="sbn:Sbal195_3304"/>
<dbReference type="HOGENOM" id="CLU_108412_0_0_6"/>
<dbReference type="Proteomes" id="UP000000770">
    <property type="component" value="Chromosome"/>
</dbReference>
<dbReference type="GO" id="GO:0005524">
    <property type="term" value="F:ATP binding"/>
    <property type="evidence" value="ECO:0007669"/>
    <property type="project" value="UniProtKB-KW"/>
</dbReference>
<dbReference type="GO" id="GO:0003677">
    <property type="term" value="F:DNA binding"/>
    <property type="evidence" value="ECO:0007669"/>
    <property type="project" value="UniProtKB-KW"/>
</dbReference>
<dbReference type="GO" id="GO:0008270">
    <property type="term" value="F:zinc ion binding"/>
    <property type="evidence" value="ECO:0007669"/>
    <property type="project" value="UniProtKB-UniRule"/>
</dbReference>
<dbReference type="GO" id="GO:0045892">
    <property type="term" value="P:negative regulation of DNA-templated transcription"/>
    <property type="evidence" value="ECO:0007669"/>
    <property type="project" value="UniProtKB-UniRule"/>
</dbReference>
<dbReference type="HAMAP" id="MF_00440">
    <property type="entry name" value="NrdR"/>
    <property type="match status" value="1"/>
</dbReference>
<dbReference type="InterPro" id="IPR005144">
    <property type="entry name" value="ATP-cone_dom"/>
</dbReference>
<dbReference type="InterPro" id="IPR055173">
    <property type="entry name" value="NrdR-like_N"/>
</dbReference>
<dbReference type="InterPro" id="IPR003796">
    <property type="entry name" value="RNR_NrdR-like"/>
</dbReference>
<dbReference type="NCBIfam" id="TIGR00244">
    <property type="entry name" value="transcriptional regulator NrdR"/>
    <property type="match status" value="1"/>
</dbReference>
<dbReference type="PANTHER" id="PTHR30455">
    <property type="entry name" value="TRANSCRIPTIONAL REPRESSOR NRDR"/>
    <property type="match status" value="1"/>
</dbReference>
<dbReference type="PANTHER" id="PTHR30455:SF2">
    <property type="entry name" value="TRANSCRIPTIONAL REPRESSOR NRDR"/>
    <property type="match status" value="1"/>
</dbReference>
<dbReference type="Pfam" id="PF03477">
    <property type="entry name" value="ATP-cone"/>
    <property type="match status" value="1"/>
</dbReference>
<dbReference type="Pfam" id="PF22811">
    <property type="entry name" value="Zn_ribbon_NrdR"/>
    <property type="match status" value="1"/>
</dbReference>
<dbReference type="PROSITE" id="PS51161">
    <property type="entry name" value="ATP_CONE"/>
    <property type="match status" value="1"/>
</dbReference>
<comment type="function">
    <text evidence="1">Negatively regulates transcription of bacterial ribonucleotide reductase nrd genes and operons by binding to NrdR-boxes.</text>
</comment>
<comment type="cofactor">
    <cofactor evidence="1">
        <name>Zn(2+)</name>
        <dbReference type="ChEBI" id="CHEBI:29105"/>
    </cofactor>
    <text evidence="1">Binds 1 zinc ion.</text>
</comment>
<comment type="similarity">
    <text evidence="1">Belongs to the NrdR family.</text>
</comment>
<accession>A9KYJ5</accession>
<protein>
    <recommendedName>
        <fullName evidence="1">Transcriptional repressor NrdR</fullName>
    </recommendedName>
</protein>
<organism>
    <name type="scientific">Shewanella baltica (strain OS195)</name>
    <dbReference type="NCBI Taxonomy" id="399599"/>
    <lineage>
        <taxon>Bacteria</taxon>
        <taxon>Pseudomonadati</taxon>
        <taxon>Pseudomonadota</taxon>
        <taxon>Gammaproteobacteria</taxon>
        <taxon>Alteromonadales</taxon>
        <taxon>Shewanellaceae</taxon>
        <taxon>Shewanella</taxon>
    </lineage>
</organism>
<name>NRDR_SHEB9</name>
<reference key="1">
    <citation type="submission" date="2007-11" db="EMBL/GenBank/DDBJ databases">
        <title>Complete sequence of chromosome of Shewanella baltica OS195.</title>
        <authorList>
            <consortium name="US DOE Joint Genome Institute"/>
            <person name="Copeland A."/>
            <person name="Lucas S."/>
            <person name="Lapidus A."/>
            <person name="Barry K."/>
            <person name="Glavina del Rio T."/>
            <person name="Dalin E."/>
            <person name="Tice H."/>
            <person name="Pitluck S."/>
            <person name="Chain P."/>
            <person name="Malfatti S."/>
            <person name="Shin M."/>
            <person name="Vergez L."/>
            <person name="Schmutz J."/>
            <person name="Larimer F."/>
            <person name="Land M."/>
            <person name="Hauser L."/>
            <person name="Kyrpides N."/>
            <person name="Kim E."/>
            <person name="Brettar I."/>
            <person name="Rodrigues J."/>
            <person name="Konstantinidis K."/>
            <person name="Klappenbach J."/>
            <person name="Hofle M."/>
            <person name="Tiedje J."/>
            <person name="Richardson P."/>
        </authorList>
    </citation>
    <scope>NUCLEOTIDE SEQUENCE [LARGE SCALE GENOMIC DNA]</scope>
    <source>
        <strain>OS195</strain>
    </source>
</reference>